<proteinExistence type="inferred from homology"/>
<accession>Q2SS99</accession>
<comment type="catalytic activity">
    <reaction evidence="1">
        <text>tRNA(Phe) + L-phenylalanine + ATP = L-phenylalanyl-tRNA(Phe) + AMP + diphosphate + H(+)</text>
        <dbReference type="Rhea" id="RHEA:19413"/>
        <dbReference type="Rhea" id="RHEA-COMP:9668"/>
        <dbReference type="Rhea" id="RHEA-COMP:9699"/>
        <dbReference type="ChEBI" id="CHEBI:15378"/>
        <dbReference type="ChEBI" id="CHEBI:30616"/>
        <dbReference type="ChEBI" id="CHEBI:33019"/>
        <dbReference type="ChEBI" id="CHEBI:58095"/>
        <dbReference type="ChEBI" id="CHEBI:78442"/>
        <dbReference type="ChEBI" id="CHEBI:78531"/>
        <dbReference type="ChEBI" id="CHEBI:456215"/>
        <dbReference type="EC" id="6.1.1.20"/>
    </reaction>
</comment>
<comment type="cofactor">
    <cofactor evidence="1">
        <name>Mg(2+)</name>
        <dbReference type="ChEBI" id="CHEBI:18420"/>
    </cofactor>
    <text evidence="1">Binds 2 magnesium ions per tetramer.</text>
</comment>
<comment type="subunit">
    <text evidence="1">Tetramer of two alpha and two beta subunits.</text>
</comment>
<comment type="subcellular location">
    <subcellularLocation>
        <location evidence="1">Cytoplasm</location>
    </subcellularLocation>
</comment>
<comment type="similarity">
    <text evidence="1">Belongs to the phenylalanyl-tRNA synthetase beta subunit family. Type 1 subfamily.</text>
</comment>
<gene>
    <name evidence="1" type="primary">pheT</name>
    <name type="ordered locus">MCAP_0384</name>
</gene>
<evidence type="ECO:0000255" key="1">
    <source>
        <dbReference type="HAMAP-Rule" id="MF_00283"/>
    </source>
</evidence>
<dbReference type="EC" id="6.1.1.20" evidence="1"/>
<dbReference type="EMBL" id="CP000123">
    <property type="protein sequence ID" value="ABC01306.1"/>
    <property type="molecule type" value="Genomic_DNA"/>
</dbReference>
<dbReference type="RefSeq" id="WP_011387265.1">
    <property type="nucleotide sequence ID" value="NC_007633.1"/>
</dbReference>
<dbReference type="SMR" id="Q2SS99"/>
<dbReference type="GeneID" id="23778661"/>
<dbReference type="KEGG" id="mcp:MCAP_0384"/>
<dbReference type="HOGENOM" id="CLU_016891_2_0_14"/>
<dbReference type="PhylomeDB" id="Q2SS99"/>
<dbReference type="Proteomes" id="UP000001928">
    <property type="component" value="Chromosome"/>
</dbReference>
<dbReference type="GO" id="GO:0009328">
    <property type="term" value="C:phenylalanine-tRNA ligase complex"/>
    <property type="evidence" value="ECO:0007669"/>
    <property type="project" value="TreeGrafter"/>
</dbReference>
<dbReference type="GO" id="GO:0005524">
    <property type="term" value="F:ATP binding"/>
    <property type="evidence" value="ECO:0007669"/>
    <property type="project" value="UniProtKB-UniRule"/>
</dbReference>
<dbReference type="GO" id="GO:0000287">
    <property type="term" value="F:magnesium ion binding"/>
    <property type="evidence" value="ECO:0007669"/>
    <property type="project" value="UniProtKB-UniRule"/>
</dbReference>
<dbReference type="GO" id="GO:0004826">
    <property type="term" value="F:phenylalanine-tRNA ligase activity"/>
    <property type="evidence" value="ECO:0007669"/>
    <property type="project" value="UniProtKB-UniRule"/>
</dbReference>
<dbReference type="GO" id="GO:0000049">
    <property type="term" value="F:tRNA binding"/>
    <property type="evidence" value="ECO:0007669"/>
    <property type="project" value="UniProtKB-KW"/>
</dbReference>
<dbReference type="GO" id="GO:0006432">
    <property type="term" value="P:phenylalanyl-tRNA aminoacylation"/>
    <property type="evidence" value="ECO:0007669"/>
    <property type="project" value="UniProtKB-UniRule"/>
</dbReference>
<dbReference type="CDD" id="cd02796">
    <property type="entry name" value="tRNA_bind_bactPheRS"/>
    <property type="match status" value="1"/>
</dbReference>
<dbReference type="Gene3D" id="3.30.56.10">
    <property type="match status" value="2"/>
</dbReference>
<dbReference type="Gene3D" id="3.30.930.10">
    <property type="entry name" value="Bira Bifunctional Protein, Domain 2"/>
    <property type="match status" value="1"/>
</dbReference>
<dbReference type="Gene3D" id="3.30.70.380">
    <property type="entry name" value="Ferrodoxin-fold anticodon-binding domain"/>
    <property type="match status" value="1"/>
</dbReference>
<dbReference type="Gene3D" id="2.40.50.140">
    <property type="entry name" value="Nucleic acid-binding proteins"/>
    <property type="match status" value="1"/>
</dbReference>
<dbReference type="Gene3D" id="3.50.40.10">
    <property type="entry name" value="Phenylalanyl-trna Synthetase, Chain B, domain 3"/>
    <property type="match status" value="1"/>
</dbReference>
<dbReference type="HAMAP" id="MF_00283">
    <property type="entry name" value="Phe_tRNA_synth_beta1"/>
    <property type="match status" value="1"/>
</dbReference>
<dbReference type="InterPro" id="IPR045864">
    <property type="entry name" value="aa-tRNA-synth_II/BPL/LPL"/>
</dbReference>
<dbReference type="InterPro" id="IPR009061">
    <property type="entry name" value="DNA-bd_dom_put_sf"/>
</dbReference>
<dbReference type="InterPro" id="IPR005121">
    <property type="entry name" value="Fdx_antiC-bd"/>
</dbReference>
<dbReference type="InterPro" id="IPR036690">
    <property type="entry name" value="Fdx_antiC-bd_sf"/>
</dbReference>
<dbReference type="InterPro" id="IPR012340">
    <property type="entry name" value="NA-bd_OB-fold"/>
</dbReference>
<dbReference type="InterPro" id="IPR045060">
    <property type="entry name" value="Phe-tRNA-ligase_IIc_bsu"/>
</dbReference>
<dbReference type="InterPro" id="IPR004532">
    <property type="entry name" value="Phe-tRNA-ligase_IIc_bsu_bact"/>
</dbReference>
<dbReference type="InterPro" id="IPR020825">
    <property type="entry name" value="Phe-tRNA_synthase-like_B3/B4"/>
</dbReference>
<dbReference type="InterPro" id="IPR041616">
    <property type="entry name" value="PheRS_beta_core"/>
</dbReference>
<dbReference type="InterPro" id="IPR002547">
    <property type="entry name" value="tRNA-bd_dom"/>
</dbReference>
<dbReference type="InterPro" id="IPR033714">
    <property type="entry name" value="tRNA_bind_bactPheRS"/>
</dbReference>
<dbReference type="InterPro" id="IPR005147">
    <property type="entry name" value="tRNA_synthase_B5-dom"/>
</dbReference>
<dbReference type="NCBIfam" id="TIGR00472">
    <property type="entry name" value="pheT_bact"/>
    <property type="match status" value="1"/>
</dbReference>
<dbReference type="NCBIfam" id="NF045760">
    <property type="entry name" value="YtpR"/>
    <property type="match status" value="1"/>
</dbReference>
<dbReference type="PANTHER" id="PTHR10947:SF0">
    <property type="entry name" value="PHENYLALANINE--TRNA LIGASE BETA SUBUNIT"/>
    <property type="match status" value="1"/>
</dbReference>
<dbReference type="PANTHER" id="PTHR10947">
    <property type="entry name" value="PHENYLALANYL-TRNA SYNTHETASE BETA CHAIN AND LEUCINE-RICH REPEAT-CONTAINING PROTEIN 47"/>
    <property type="match status" value="1"/>
</dbReference>
<dbReference type="Pfam" id="PF03484">
    <property type="entry name" value="B5"/>
    <property type="match status" value="1"/>
</dbReference>
<dbReference type="Pfam" id="PF03147">
    <property type="entry name" value="FDX-ACB"/>
    <property type="match status" value="1"/>
</dbReference>
<dbReference type="Pfam" id="PF01588">
    <property type="entry name" value="tRNA_bind"/>
    <property type="match status" value="1"/>
</dbReference>
<dbReference type="Pfam" id="PF17759">
    <property type="entry name" value="tRNA_synthFbeta"/>
    <property type="match status" value="1"/>
</dbReference>
<dbReference type="SMART" id="SM00874">
    <property type="entry name" value="B5"/>
    <property type="match status" value="1"/>
</dbReference>
<dbReference type="SMART" id="SM00896">
    <property type="entry name" value="FDX-ACB"/>
    <property type="match status" value="1"/>
</dbReference>
<dbReference type="SUPFAM" id="SSF54991">
    <property type="entry name" value="Anticodon-binding domain of PheRS"/>
    <property type="match status" value="1"/>
</dbReference>
<dbReference type="SUPFAM" id="SSF55681">
    <property type="entry name" value="Class II aaRS and biotin synthetases"/>
    <property type="match status" value="1"/>
</dbReference>
<dbReference type="SUPFAM" id="SSF50249">
    <property type="entry name" value="Nucleic acid-binding proteins"/>
    <property type="match status" value="1"/>
</dbReference>
<dbReference type="SUPFAM" id="SSF56037">
    <property type="entry name" value="PheT/TilS domain"/>
    <property type="match status" value="1"/>
</dbReference>
<dbReference type="SUPFAM" id="SSF46955">
    <property type="entry name" value="Putative DNA-binding domain"/>
    <property type="match status" value="1"/>
</dbReference>
<dbReference type="PROSITE" id="PS51483">
    <property type="entry name" value="B5"/>
    <property type="match status" value="1"/>
</dbReference>
<dbReference type="PROSITE" id="PS51447">
    <property type="entry name" value="FDX_ACB"/>
    <property type="match status" value="1"/>
</dbReference>
<dbReference type="PROSITE" id="PS50886">
    <property type="entry name" value="TRBD"/>
    <property type="match status" value="1"/>
</dbReference>
<feature type="chain" id="PRO_0000232805" description="Phenylalanine--tRNA ligase beta subunit">
    <location>
        <begin position="1"/>
        <end position="794"/>
    </location>
</feature>
<feature type="domain" description="tRNA-binding" evidence="1">
    <location>
        <begin position="40"/>
        <end position="158"/>
    </location>
</feature>
<feature type="domain" description="B5" evidence="1">
    <location>
        <begin position="402"/>
        <end position="477"/>
    </location>
</feature>
<feature type="domain" description="FDX-ACB" evidence="1">
    <location>
        <begin position="702"/>
        <end position="794"/>
    </location>
</feature>
<feature type="binding site" evidence="1">
    <location>
        <position position="455"/>
    </location>
    <ligand>
        <name>Mg(2+)</name>
        <dbReference type="ChEBI" id="CHEBI:18420"/>
        <note>shared with alpha subunit</note>
    </ligand>
</feature>
<feature type="binding site" evidence="1">
    <location>
        <position position="461"/>
    </location>
    <ligand>
        <name>Mg(2+)</name>
        <dbReference type="ChEBI" id="CHEBI:18420"/>
        <note>shared with alpha subunit</note>
    </ligand>
</feature>
<feature type="binding site" evidence="1">
    <location>
        <position position="464"/>
    </location>
    <ligand>
        <name>Mg(2+)</name>
        <dbReference type="ChEBI" id="CHEBI:18420"/>
        <note>shared with alpha subunit</note>
    </ligand>
</feature>
<feature type="binding site" evidence="1">
    <location>
        <position position="465"/>
    </location>
    <ligand>
        <name>Mg(2+)</name>
        <dbReference type="ChEBI" id="CHEBI:18420"/>
        <note>shared with alpha subunit</note>
    </ligand>
</feature>
<name>SYFB_MYCCT</name>
<keyword id="KW-0030">Aminoacyl-tRNA synthetase</keyword>
<keyword id="KW-0067">ATP-binding</keyword>
<keyword id="KW-0963">Cytoplasm</keyword>
<keyword id="KW-0436">Ligase</keyword>
<keyword id="KW-0460">Magnesium</keyword>
<keyword id="KW-0479">Metal-binding</keyword>
<keyword id="KW-0547">Nucleotide-binding</keyword>
<keyword id="KW-0648">Protein biosynthesis</keyword>
<keyword id="KW-0694">RNA-binding</keyword>
<keyword id="KW-0820">tRNA-binding</keyword>
<sequence>MIITRNWLKKYLNLDNISNDQINVALNSLGFEVDNVYDLNSLNSELVLGYVEQSKQIPDTHLKLNKVNIGTKSLQIVCGASNVDVNQFVIVAPINATIANGLTLTSKKIQNYESQGMICALNEIGINQSVINKEDQLKIYNVFDKNLDLKKYLGKDVKQIIGLDDYLFEIDLTLNRSDCLASFQILKELANYFDLEIKNYDNKFNDFKENDLDLKITISKKIEEQIKTISYSNFVLNNHLNKLDSIDDIFLKLNQISSTNNLINDLSLLSTLSTAQTHILIDLDKLKSFNLKLELINHNDKELLCLTSDNQIVNIIGLQTESKFSIDNNSKNVLNIMVNIEPNLMRKQQKLLNTSNINLQRYIKPINPNLFDLANLNLTSLLNSYNLVNKAYKVKVLKQTYKNKTEFEIKISEINDLLGTNLTIDQIKSLFKKLDFKITNKNDLLTFNIDPNRIDISSKNDLCEEVARLYSYDNIQEVALSFTSFKKPKNLNLKLENKLTNYLIGLGFNNTKTYSLTTQIDAKHWNLFNISDFINLLSPLSNLRQTYRTSLSKSLIDTAIYNHSINNKELKLFEIADIYNLNQLKQRHLVFLTSHHIYKNGLTHQLVENNFYYNKEILESIFDLYNLDFSQIKYVNNLDVIKEIHLYINATIYYQKQLVGFIYQLNPKFESENKLNKTFVCEINLDVLNELKNKTIEAKTLSKFQSSSRDLTIEISNDLIYQDVLLKAISDVKYITSSKVVDLYLDDKLAKNNTKALTIQFIFNDLDHQLTEAEINTEFEKIISNVKKMKVVIR</sequence>
<reference key="1">
    <citation type="submission" date="2005-09" db="EMBL/GenBank/DDBJ databases">
        <authorList>
            <person name="Glass J.I."/>
            <person name="Lartigue C."/>
            <person name="Pfannkoch C."/>
            <person name="Baden-Tillson H."/>
            <person name="Smith H.O."/>
            <person name="Venter J.C."/>
            <person name="Roske K."/>
            <person name="Wise K.S."/>
            <person name="Calcutt M.J."/>
            <person name="Nelson W.C."/>
            <person name="Nierman W.C."/>
        </authorList>
    </citation>
    <scope>NUCLEOTIDE SEQUENCE [LARGE SCALE GENOMIC DNA]</scope>
    <source>
        <strain>California kid / ATCC 27343 / NCTC 10154</strain>
    </source>
</reference>
<protein>
    <recommendedName>
        <fullName evidence="1">Phenylalanine--tRNA ligase beta subunit</fullName>
        <ecNumber evidence="1">6.1.1.20</ecNumber>
    </recommendedName>
    <alternativeName>
        <fullName evidence="1">Phenylalanyl-tRNA synthetase beta subunit</fullName>
        <shortName evidence="1">PheRS</shortName>
    </alternativeName>
</protein>
<organism>
    <name type="scientific">Mycoplasma capricolum subsp. capricolum (strain California kid / ATCC 27343 / NCTC 10154)</name>
    <dbReference type="NCBI Taxonomy" id="340047"/>
    <lineage>
        <taxon>Bacteria</taxon>
        <taxon>Bacillati</taxon>
        <taxon>Mycoplasmatota</taxon>
        <taxon>Mollicutes</taxon>
        <taxon>Mycoplasmataceae</taxon>
        <taxon>Mycoplasma</taxon>
    </lineage>
</organism>